<reference key="1">
    <citation type="journal article" date="2003" name="Nucleic Acids Res.">
        <title>The complete genome sequence and analysis of Corynebacterium diphtheriae NCTC13129.</title>
        <authorList>
            <person name="Cerdeno-Tarraga A.-M."/>
            <person name="Efstratiou A."/>
            <person name="Dover L.G."/>
            <person name="Holden M.T.G."/>
            <person name="Pallen M.J."/>
            <person name="Bentley S.D."/>
            <person name="Besra G.S."/>
            <person name="Churcher C.M."/>
            <person name="James K.D."/>
            <person name="De Zoysa A."/>
            <person name="Chillingworth T."/>
            <person name="Cronin A."/>
            <person name="Dowd L."/>
            <person name="Feltwell T."/>
            <person name="Hamlin N."/>
            <person name="Holroyd S."/>
            <person name="Jagels K."/>
            <person name="Moule S."/>
            <person name="Quail M.A."/>
            <person name="Rabbinowitsch E."/>
            <person name="Rutherford K.M."/>
            <person name="Thomson N.R."/>
            <person name="Unwin L."/>
            <person name="Whitehead S."/>
            <person name="Barrell B.G."/>
            <person name="Parkhill J."/>
        </authorList>
    </citation>
    <scope>NUCLEOTIDE SEQUENCE [LARGE SCALE GENOMIC DNA]</scope>
    <source>
        <strain>ATCC 700971 / NCTC 13129 / Biotype gravis</strain>
    </source>
</reference>
<accession>P62213</accession>
<protein>
    <recommendedName>
        <fullName evidence="1">Protein RecA</fullName>
    </recommendedName>
    <alternativeName>
        <fullName evidence="1">Recombinase A</fullName>
    </alternativeName>
</protein>
<proteinExistence type="inferred from homology"/>
<feature type="chain" id="PRO_0000122694" description="Protein RecA">
    <location>
        <begin position="1"/>
        <end position="372"/>
    </location>
</feature>
<feature type="binding site" evidence="1">
    <location>
        <begin position="77"/>
        <end position="84"/>
    </location>
    <ligand>
        <name>ATP</name>
        <dbReference type="ChEBI" id="CHEBI:30616"/>
    </ligand>
</feature>
<sequence length="372" mass="40029">MAPRKNSKTQQPTGDNRKKALDAALAMIEKDFGKGAVMRLGDENRPPISAISSGNTAIDVALGIGGFPRGRIVEVYGPESSGKTTVALHAIAQAQKAGGIAAFIDAEHALDPDYARKLGVDTDALLVSQPDTGEQALEIADMLVRSGAIDIIVIDSVAALTPKAEIEGEMGDSHVGLQARLMSQALRKMTGALYNSGTTAIFINQLREKIGVMFGSPETTTGGKALKFYASVRCDVRRIQTLKDGQDAIGNRTRLKVVKNKVSPPFKIAEFDIMYGEGISRESSIIDLGVDNGIIKKSGSWFTYEGDQLGQGKEKVRLYLKETPELADEIEDKIFRALHIGKYAALKDADDALTDDPVDMVPNVDFDDSDDD</sequence>
<comment type="function">
    <text evidence="1">Can catalyze the hydrolysis of ATP in the presence of single-stranded DNA, the ATP-dependent uptake of single-stranded DNA by duplex DNA, and the ATP-dependent hybridization of homologous single-stranded DNAs. It interacts with LexA causing its activation and leading to its autocatalytic cleavage.</text>
</comment>
<comment type="subcellular location">
    <subcellularLocation>
        <location evidence="1">Cytoplasm</location>
    </subcellularLocation>
</comment>
<comment type="similarity">
    <text evidence="1">Belongs to the RecA family.</text>
</comment>
<name>RECA_CORDI</name>
<gene>
    <name evidence="1" type="primary">recA</name>
    <name type="ordered locus">DIP1450</name>
</gene>
<dbReference type="EMBL" id="BX248358">
    <property type="protein sequence ID" value="CAE49978.1"/>
    <property type="molecule type" value="Genomic_DNA"/>
</dbReference>
<dbReference type="RefSeq" id="WP_003851873.1">
    <property type="nucleotide sequence ID" value="NC_002935.2"/>
</dbReference>
<dbReference type="SMR" id="P62213"/>
<dbReference type="STRING" id="257309.DIP1450"/>
<dbReference type="GeneID" id="29421206"/>
<dbReference type="KEGG" id="cdi:DIP1450"/>
<dbReference type="HOGENOM" id="CLU_040469_3_2_11"/>
<dbReference type="Proteomes" id="UP000002198">
    <property type="component" value="Chromosome"/>
</dbReference>
<dbReference type="GO" id="GO:0005829">
    <property type="term" value="C:cytosol"/>
    <property type="evidence" value="ECO:0007669"/>
    <property type="project" value="TreeGrafter"/>
</dbReference>
<dbReference type="GO" id="GO:0005524">
    <property type="term" value="F:ATP binding"/>
    <property type="evidence" value="ECO:0007669"/>
    <property type="project" value="UniProtKB-UniRule"/>
</dbReference>
<dbReference type="GO" id="GO:0016887">
    <property type="term" value="F:ATP hydrolysis activity"/>
    <property type="evidence" value="ECO:0007669"/>
    <property type="project" value="InterPro"/>
</dbReference>
<dbReference type="GO" id="GO:0140664">
    <property type="term" value="F:ATP-dependent DNA damage sensor activity"/>
    <property type="evidence" value="ECO:0007669"/>
    <property type="project" value="InterPro"/>
</dbReference>
<dbReference type="GO" id="GO:0003684">
    <property type="term" value="F:damaged DNA binding"/>
    <property type="evidence" value="ECO:0007669"/>
    <property type="project" value="UniProtKB-UniRule"/>
</dbReference>
<dbReference type="GO" id="GO:0003697">
    <property type="term" value="F:single-stranded DNA binding"/>
    <property type="evidence" value="ECO:0007669"/>
    <property type="project" value="UniProtKB-UniRule"/>
</dbReference>
<dbReference type="GO" id="GO:0006310">
    <property type="term" value="P:DNA recombination"/>
    <property type="evidence" value="ECO:0007669"/>
    <property type="project" value="UniProtKB-UniRule"/>
</dbReference>
<dbReference type="GO" id="GO:0006281">
    <property type="term" value="P:DNA repair"/>
    <property type="evidence" value="ECO:0007669"/>
    <property type="project" value="UniProtKB-UniRule"/>
</dbReference>
<dbReference type="GO" id="GO:0009432">
    <property type="term" value="P:SOS response"/>
    <property type="evidence" value="ECO:0007669"/>
    <property type="project" value="UniProtKB-UniRule"/>
</dbReference>
<dbReference type="CDD" id="cd00983">
    <property type="entry name" value="RecA"/>
    <property type="match status" value="1"/>
</dbReference>
<dbReference type="FunFam" id="3.40.50.300:FF:000087">
    <property type="entry name" value="Recombinase RecA"/>
    <property type="match status" value="1"/>
</dbReference>
<dbReference type="Gene3D" id="3.40.50.300">
    <property type="entry name" value="P-loop containing nucleotide triphosphate hydrolases"/>
    <property type="match status" value="1"/>
</dbReference>
<dbReference type="HAMAP" id="MF_00268">
    <property type="entry name" value="RecA"/>
    <property type="match status" value="1"/>
</dbReference>
<dbReference type="InterPro" id="IPR003593">
    <property type="entry name" value="AAA+_ATPase"/>
</dbReference>
<dbReference type="InterPro" id="IPR013765">
    <property type="entry name" value="DNA_recomb/repair_RecA"/>
</dbReference>
<dbReference type="InterPro" id="IPR020584">
    <property type="entry name" value="DNA_recomb/repair_RecA_CS"/>
</dbReference>
<dbReference type="InterPro" id="IPR027417">
    <property type="entry name" value="P-loop_NTPase"/>
</dbReference>
<dbReference type="InterPro" id="IPR049261">
    <property type="entry name" value="RecA-like_C"/>
</dbReference>
<dbReference type="InterPro" id="IPR049428">
    <property type="entry name" value="RecA-like_N"/>
</dbReference>
<dbReference type="InterPro" id="IPR020588">
    <property type="entry name" value="RecA_ATP-bd"/>
</dbReference>
<dbReference type="InterPro" id="IPR023400">
    <property type="entry name" value="RecA_C_sf"/>
</dbReference>
<dbReference type="InterPro" id="IPR020587">
    <property type="entry name" value="RecA_monomer-monomer_interface"/>
</dbReference>
<dbReference type="NCBIfam" id="TIGR02012">
    <property type="entry name" value="tigrfam_recA"/>
    <property type="match status" value="1"/>
</dbReference>
<dbReference type="PANTHER" id="PTHR45900:SF1">
    <property type="entry name" value="MITOCHONDRIAL DNA REPAIR PROTEIN RECA HOMOLOG-RELATED"/>
    <property type="match status" value="1"/>
</dbReference>
<dbReference type="PANTHER" id="PTHR45900">
    <property type="entry name" value="RECA"/>
    <property type="match status" value="1"/>
</dbReference>
<dbReference type="Pfam" id="PF00154">
    <property type="entry name" value="RecA"/>
    <property type="match status" value="1"/>
</dbReference>
<dbReference type="Pfam" id="PF21096">
    <property type="entry name" value="RecA_C"/>
    <property type="match status" value="1"/>
</dbReference>
<dbReference type="PRINTS" id="PR00142">
    <property type="entry name" value="RECA"/>
</dbReference>
<dbReference type="SMART" id="SM00382">
    <property type="entry name" value="AAA"/>
    <property type="match status" value="1"/>
</dbReference>
<dbReference type="SUPFAM" id="SSF52540">
    <property type="entry name" value="P-loop containing nucleoside triphosphate hydrolases"/>
    <property type="match status" value="1"/>
</dbReference>
<dbReference type="SUPFAM" id="SSF54752">
    <property type="entry name" value="RecA protein, C-terminal domain"/>
    <property type="match status" value="1"/>
</dbReference>
<dbReference type="PROSITE" id="PS00321">
    <property type="entry name" value="RECA_1"/>
    <property type="match status" value="1"/>
</dbReference>
<dbReference type="PROSITE" id="PS50162">
    <property type="entry name" value="RECA_2"/>
    <property type="match status" value="1"/>
</dbReference>
<dbReference type="PROSITE" id="PS50163">
    <property type="entry name" value="RECA_3"/>
    <property type="match status" value="1"/>
</dbReference>
<keyword id="KW-0067">ATP-binding</keyword>
<keyword id="KW-0963">Cytoplasm</keyword>
<keyword id="KW-0227">DNA damage</keyword>
<keyword id="KW-0233">DNA recombination</keyword>
<keyword id="KW-0234">DNA repair</keyword>
<keyword id="KW-0238">DNA-binding</keyword>
<keyword id="KW-0547">Nucleotide-binding</keyword>
<keyword id="KW-1185">Reference proteome</keyword>
<keyword id="KW-0742">SOS response</keyword>
<evidence type="ECO:0000255" key="1">
    <source>
        <dbReference type="HAMAP-Rule" id="MF_00268"/>
    </source>
</evidence>
<organism>
    <name type="scientific">Corynebacterium diphtheriae (strain ATCC 700971 / NCTC 13129 / Biotype gravis)</name>
    <dbReference type="NCBI Taxonomy" id="257309"/>
    <lineage>
        <taxon>Bacteria</taxon>
        <taxon>Bacillati</taxon>
        <taxon>Actinomycetota</taxon>
        <taxon>Actinomycetes</taxon>
        <taxon>Mycobacteriales</taxon>
        <taxon>Corynebacteriaceae</taxon>
        <taxon>Corynebacterium</taxon>
    </lineage>
</organism>